<reference evidence="8" key="1">
    <citation type="journal article" date="2010" name="Biomed. Res.">
        <title>Molecular diversity in venom proteins of the Russell's viper (Daboia russellii russellii) and the Indian cobra (Naja naja) in Sri Lanka.</title>
        <authorList>
            <person name="Suzuki M."/>
            <person name="Itoh T."/>
            <person name="Bandaranayake B.M.A.I.K."/>
            <person name="Ranasinghe J.G."/>
            <person name="Athauda S.B."/>
            <person name="Moriyama A."/>
        </authorList>
    </citation>
    <scope>PROTEIN SEQUENCE</scope>
    <scope>SUBCELLULAR LOCATION</scope>
    <source>
        <tissue evidence="6">Venom</tissue>
    </source>
</reference>
<accession>P86368</accession>
<feature type="chain" id="PRO_0000394737" description="Basic phospholipase A2 3">
    <location>
        <begin position="1"/>
        <end position="121"/>
    </location>
</feature>
<feature type="active site" evidence="2">
    <location>
        <position position="47"/>
    </location>
</feature>
<feature type="active site" evidence="2">
    <location>
        <position position="89"/>
    </location>
</feature>
<feature type="binding site" evidence="3">
    <location>
        <position position="27"/>
    </location>
    <ligand>
        <name>Ca(2+)</name>
        <dbReference type="ChEBI" id="CHEBI:29108"/>
    </ligand>
</feature>
<feature type="binding site" evidence="3">
    <location>
        <position position="29"/>
    </location>
    <ligand>
        <name>Ca(2+)</name>
        <dbReference type="ChEBI" id="CHEBI:29108"/>
    </ligand>
</feature>
<feature type="binding site" evidence="3">
    <location>
        <position position="31"/>
    </location>
    <ligand>
        <name>Ca(2+)</name>
        <dbReference type="ChEBI" id="CHEBI:29108"/>
    </ligand>
</feature>
<feature type="binding site" evidence="3">
    <location>
        <position position="48"/>
    </location>
    <ligand>
        <name>Ca(2+)</name>
        <dbReference type="ChEBI" id="CHEBI:29108"/>
    </ligand>
</feature>
<feature type="disulfide bond" evidence="3">
    <location>
        <begin position="26"/>
        <end position="115"/>
    </location>
</feature>
<feature type="disulfide bond" evidence="3">
    <location>
        <begin position="28"/>
        <end position="44"/>
    </location>
</feature>
<feature type="disulfide bond" evidence="3">
    <location>
        <begin position="43"/>
        <end position="95"/>
    </location>
</feature>
<feature type="disulfide bond" evidence="3">
    <location>
        <begin position="49"/>
        <end position="121"/>
    </location>
</feature>
<feature type="disulfide bond" evidence="3">
    <location>
        <begin position="50"/>
        <end position="88"/>
    </location>
</feature>
<feature type="disulfide bond" evidence="3">
    <location>
        <begin position="57"/>
        <end position="81"/>
    </location>
</feature>
<feature type="disulfide bond" evidence="3">
    <location>
        <begin position="75"/>
        <end position="86"/>
    </location>
</feature>
<sequence>SLLEFGMMILEETGKLAVPFYSSYGCYCGWGGKATPKDATDRCCFVHDCCYGNLPDCNPKSDRYKYKRVNGAIVCEQGTSCENRICECDKAAAICFRRNLNTYSKIYMLYPDFLCKGELKC</sequence>
<dbReference type="EC" id="3.1.1.4"/>
<dbReference type="SMR" id="P86368"/>
<dbReference type="GO" id="GO:0005576">
    <property type="term" value="C:extracellular region"/>
    <property type="evidence" value="ECO:0007669"/>
    <property type="project" value="UniProtKB-SubCell"/>
</dbReference>
<dbReference type="GO" id="GO:0005509">
    <property type="term" value="F:calcium ion binding"/>
    <property type="evidence" value="ECO:0007669"/>
    <property type="project" value="InterPro"/>
</dbReference>
<dbReference type="GO" id="GO:0047498">
    <property type="term" value="F:calcium-dependent phospholipase A2 activity"/>
    <property type="evidence" value="ECO:0007669"/>
    <property type="project" value="TreeGrafter"/>
</dbReference>
<dbReference type="GO" id="GO:0005543">
    <property type="term" value="F:phospholipid binding"/>
    <property type="evidence" value="ECO:0007669"/>
    <property type="project" value="TreeGrafter"/>
</dbReference>
<dbReference type="GO" id="GO:0050482">
    <property type="term" value="P:arachidonate secretion"/>
    <property type="evidence" value="ECO:0007669"/>
    <property type="project" value="InterPro"/>
</dbReference>
<dbReference type="GO" id="GO:0016042">
    <property type="term" value="P:lipid catabolic process"/>
    <property type="evidence" value="ECO:0007669"/>
    <property type="project" value="UniProtKB-KW"/>
</dbReference>
<dbReference type="GO" id="GO:0042130">
    <property type="term" value="P:negative regulation of T cell proliferation"/>
    <property type="evidence" value="ECO:0007669"/>
    <property type="project" value="TreeGrafter"/>
</dbReference>
<dbReference type="GO" id="GO:0006644">
    <property type="term" value="P:phospholipid metabolic process"/>
    <property type="evidence" value="ECO:0007669"/>
    <property type="project" value="InterPro"/>
</dbReference>
<dbReference type="CDD" id="cd00125">
    <property type="entry name" value="PLA2c"/>
    <property type="match status" value="1"/>
</dbReference>
<dbReference type="FunFam" id="1.20.90.10:FF:000001">
    <property type="entry name" value="Basic phospholipase A2 homolog"/>
    <property type="match status" value="1"/>
</dbReference>
<dbReference type="Gene3D" id="1.20.90.10">
    <property type="entry name" value="Phospholipase A2 domain"/>
    <property type="match status" value="1"/>
</dbReference>
<dbReference type="InterPro" id="IPR001211">
    <property type="entry name" value="PLipase_A2"/>
</dbReference>
<dbReference type="InterPro" id="IPR033112">
    <property type="entry name" value="PLipase_A2_Asp_AS"/>
</dbReference>
<dbReference type="InterPro" id="IPR016090">
    <property type="entry name" value="PLipase_A2_dom"/>
</dbReference>
<dbReference type="InterPro" id="IPR036444">
    <property type="entry name" value="PLipase_A2_dom_sf"/>
</dbReference>
<dbReference type="InterPro" id="IPR033113">
    <property type="entry name" value="PLipase_A2_His_AS"/>
</dbReference>
<dbReference type="PANTHER" id="PTHR11716">
    <property type="entry name" value="PHOSPHOLIPASE A2 FAMILY MEMBER"/>
    <property type="match status" value="1"/>
</dbReference>
<dbReference type="PANTHER" id="PTHR11716:SF9">
    <property type="entry name" value="PHOSPHOLIPASE A2, MEMBRANE ASSOCIATED"/>
    <property type="match status" value="1"/>
</dbReference>
<dbReference type="Pfam" id="PF00068">
    <property type="entry name" value="Phospholip_A2_1"/>
    <property type="match status" value="1"/>
</dbReference>
<dbReference type="PRINTS" id="PR00389">
    <property type="entry name" value="PHPHLIPASEA2"/>
</dbReference>
<dbReference type="SMART" id="SM00085">
    <property type="entry name" value="PA2c"/>
    <property type="match status" value="1"/>
</dbReference>
<dbReference type="SUPFAM" id="SSF48619">
    <property type="entry name" value="Phospholipase A2, PLA2"/>
    <property type="match status" value="1"/>
</dbReference>
<dbReference type="PROSITE" id="PS00119">
    <property type="entry name" value="PA2_ASP"/>
    <property type="match status" value="1"/>
</dbReference>
<dbReference type="PROSITE" id="PS00118">
    <property type="entry name" value="PA2_HIS"/>
    <property type="match status" value="1"/>
</dbReference>
<name>PA2B3_DABRR</name>
<keyword id="KW-0106">Calcium</keyword>
<keyword id="KW-0903">Direct protein sequencing</keyword>
<keyword id="KW-1015">Disulfide bond</keyword>
<keyword id="KW-0378">Hydrolase</keyword>
<keyword id="KW-0442">Lipid degradation</keyword>
<keyword id="KW-0443">Lipid metabolism</keyword>
<keyword id="KW-0479">Metal-binding</keyword>
<keyword id="KW-0964">Secreted</keyword>
<proteinExistence type="evidence at protein level"/>
<protein>
    <recommendedName>
        <fullName>Basic phospholipase A2 3</fullName>
        <shortName evidence="7">PLA23</shortName>
        <shortName>svPLA2</shortName>
        <ecNumber>3.1.1.4</ecNumber>
    </recommendedName>
    <alternativeName>
        <fullName evidence="3">Phosphatidylcholine 2-acylhydrolase</fullName>
    </alternativeName>
</protein>
<comment type="function">
    <text evidence="1">PLA2 catalyzes the calcium-dependent hydrolysis of the 2-acyl groups in 3-sn-phosphoglycerides.</text>
</comment>
<comment type="catalytic activity">
    <reaction evidence="3 4 5">
        <text>a 1,2-diacyl-sn-glycero-3-phosphocholine + H2O = a 1-acyl-sn-glycero-3-phosphocholine + a fatty acid + H(+)</text>
        <dbReference type="Rhea" id="RHEA:15801"/>
        <dbReference type="ChEBI" id="CHEBI:15377"/>
        <dbReference type="ChEBI" id="CHEBI:15378"/>
        <dbReference type="ChEBI" id="CHEBI:28868"/>
        <dbReference type="ChEBI" id="CHEBI:57643"/>
        <dbReference type="ChEBI" id="CHEBI:58168"/>
        <dbReference type="EC" id="3.1.1.4"/>
    </reaction>
</comment>
<comment type="cofactor">
    <cofactor evidence="3">
        <name>Ca(2+)</name>
        <dbReference type="ChEBI" id="CHEBI:29108"/>
    </cofactor>
    <text evidence="3">Binds 1 Ca(2+) ion.</text>
</comment>
<comment type="subcellular location">
    <subcellularLocation>
        <location evidence="6">Secreted</location>
    </subcellularLocation>
</comment>
<comment type="tissue specificity">
    <text evidence="9">Expressed by the venom gland.</text>
</comment>
<comment type="similarity">
    <text evidence="8">Belongs to the phospholipase A2 family. Group II subfamily. D49 sub-subfamily.</text>
</comment>
<evidence type="ECO:0000250" key="1"/>
<evidence type="ECO:0000250" key="2">
    <source>
        <dbReference type="UniProtKB" id="P14418"/>
    </source>
</evidence>
<evidence type="ECO:0000250" key="3">
    <source>
        <dbReference type="UniProtKB" id="P59071"/>
    </source>
</evidence>
<evidence type="ECO:0000255" key="4">
    <source>
        <dbReference type="PROSITE-ProRule" id="PRU10035"/>
    </source>
</evidence>
<evidence type="ECO:0000255" key="5">
    <source>
        <dbReference type="PROSITE-ProRule" id="PRU10036"/>
    </source>
</evidence>
<evidence type="ECO:0000269" key="6">
    <source>
    </source>
</evidence>
<evidence type="ECO:0000303" key="7">
    <source>
    </source>
</evidence>
<evidence type="ECO:0000305" key="8"/>
<evidence type="ECO:0000305" key="9">
    <source>
    </source>
</evidence>
<organism>
    <name type="scientific">Daboia russelii</name>
    <name type="common">Russel's viper</name>
    <name type="synonym">Vipera russelii</name>
    <dbReference type="NCBI Taxonomy" id="8707"/>
    <lineage>
        <taxon>Eukaryota</taxon>
        <taxon>Metazoa</taxon>
        <taxon>Chordata</taxon>
        <taxon>Craniata</taxon>
        <taxon>Vertebrata</taxon>
        <taxon>Euteleostomi</taxon>
        <taxon>Lepidosauria</taxon>
        <taxon>Squamata</taxon>
        <taxon>Bifurcata</taxon>
        <taxon>Unidentata</taxon>
        <taxon>Episquamata</taxon>
        <taxon>Toxicofera</taxon>
        <taxon>Serpentes</taxon>
        <taxon>Colubroidea</taxon>
        <taxon>Viperidae</taxon>
        <taxon>Viperinae</taxon>
        <taxon>Daboia</taxon>
    </lineage>
</organism>